<dbReference type="EMBL" id="AM286415">
    <property type="protein sequence ID" value="CAL11101.1"/>
    <property type="molecule type" value="Genomic_DNA"/>
</dbReference>
<dbReference type="RefSeq" id="WP_005166327.1">
    <property type="nucleotide sequence ID" value="NC_008800.1"/>
</dbReference>
<dbReference type="RefSeq" id="YP_001005336.1">
    <property type="nucleotide sequence ID" value="NC_008800.1"/>
</dbReference>
<dbReference type="SMR" id="A1JKI9"/>
<dbReference type="GeneID" id="31412122"/>
<dbReference type="KEGG" id="yen:YE1003"/>
<dbReference type="PATRIC" id="fig|393305.7.peg.1100"/>
<dbReference type="eggNOG" id="COG3445">
    <property type="taxonomic scope" value="Bacteria"/>
</dbReference>
<dbReference type="HOGENOM" id="CLU_133780_0_0_6"/>
<dbReference type="OrthoDB" id="9803969at2"/>
<dbReference type="Proteomes" id="UP000000642">
    <property type="component" value="Chromosome"/>
</dbReference>
<dbReference type="GO" id="GO:0005829">
    <property type="term" value="C:cytosol"/>
    <property type="evidence" value="ECO:0007669"/>
    <property type="project" value="TreeGrafter"/>
</dbReference>
<dbReference type="GO" id="GO:0008861">
    <property type="term" value="F:formate C-acetyltransferase activity"/>
    <property type="evidence" value="ECO:0007669"/>
    <property type="project" value="TreeGrafter"/>
</dbReference>
<dbReference type="FunFam" id="3.20.70.20:FF:000002">
    <property type="entry name" value="Autonomous glycyl radical cofactor"/>
    <property type="match status" value="1"/>
</dbReference>
<dbReference type="Gene3D" id="3.20.70.20">
    <property type="match status" value="1"/>
</dbReference>
<dbReference type="HAMAP" id="MF_00806">
    <property type="entry name" value="GrcA"/>
    <property type="match status" value="1"/>
</dbReference>
<dbReference type="InterPro" id="IPR050244">
    <property type="entry name" value="Auton_GlycylRad_Cofactor"/>
</dbReference>
<dbReference type="InterPro" id="IPR019777">
    <property type="entry name" value="Form_AcTrfase_GR_CS"/>
</dbReference>
<dbReference type="InterPro" id="IPR001150">
    <property type="entry name" value="Gly_radical"/>
</dbReference>
<dbReference type="InterPro" id="IPR011140">
    <property type="entry name" value="Glycyl_radical_cofactor_GrcA"/>
</dbReference>
<dbReference type="NCBIfam" id="TIGR04365">
    <property type="entry name" value="spare_glycyl"/>
    <property type="match status" value="1"/>
</dbReference>
<dbReference type="PANTHER" id="PTHR30191">
    <property type="entry name" value="FORMATE ACETYLTRANSFERASE"/>
    <property type="match status" value="1"/>
</dbReference>
<dbReference type="PANTHER" id="PTHR30191:SF0">
    <property type="entry name" value="FORMATE ACETYLTRANSFERASE 1"/>
    <property type="match status" value="1"/>
</dbReference>
<dbReference type="Pfam" id="PF01228">
    <property type="entry name" value="Gly_radical"/>
    <property type="match status" value="1"/>
</dbReference>
<dbReference type="PIRSF" id="PIRSF000378">
    <property type="entry name" value="Gly_radicl_yfiD"/>
    <property type="match status" value="1"/>
</dbReference>
<dbReference type="SUPFAM" id="SSF51998">
    <property type="entry name" value="PFL-like glycyl radical enzymes"/>
    <property type="match status" value="1"/>
</dbReference>
<dbReference type="PROSITE" id="PS00850">
    <property type="entry name" value="GLY_RADICAL_1"/>
    <property type="match status" value="1"/>
</dbReference>
<dbReference type="PROSITE" id="PS51149">
    <property type="entry name" value="GLY_RADICAL_2"/>
    <property type="match status" value="1"/>
</dbReference>
<reference key="1">
    <citation type="journal article" date="2006" name="PLoS Genet.">
        <title>The complete genome sequence and comparative genome analysis of the high pathogenicity Yersinia enterocolitica strain 8081.</title>
        <authorList>
            <person name="Thomson N.R."/>
            <person name="Howard S."/>
            <person name="Wren B.W."/>
            <person name="Holden M.T.G."/>
            <person name="Crossman L."/>
            <person name="Challis G.L."/>
            <person name="Churcher C."/>
            <person name="Mungall K."/>
            <person name="Brooks K."/>
            <person name="Chillingworth T."/>
            <person name="Feltwell T."/>
            <person name="Abdellah Z."/>
            <person name="Hauser H."/>
            <person name="Jagels K."/>
            <person name="Maddison M."/>
            <person name="Moule S."/>
            <person name="Sanders M."/>
            <person name="Whitehead S."/>
            <person name="Quail M.A."/>
            <person name="Dougan G."/>
            <person name="Parkhill J."/>
            <person name="Prentice M.B."/>
        </authorList>
    </citation>
    <scope>NUCLEOTIDE SEQUENCE [LARGE SCALE GENOMIC DNA]</scope>
    <source>
        <strain>NCTC 13174 / 8081</strain>
    </source>
</reference>
<sequence>MITGIQITKANNEALLNSFWLLDDEKAELRCVCAKAGYAEDQIVPASELGQIEYREIPLEVQPTVRVEGGQHLNVNVLRRETLEDAVKHPEKYPQLTIRVSGYAVRFNSLTPEQQRDVITRTFTESL</sequence>
<name>GRCA_YERE8</name>
<proteinExistence type="inferred from homology"/>
<protein>
    <recommendedName>
        <fullName evidence="1">Autonomous glycyl radical cofactor</fullName>
    </recommendedName>
</protein>
<gene>
    <name evidence="1" type="primary">grcA</name>
    <name type="ordered locus">YE1003</name>
</gene>
<comment type="function">
    <text evidence="1">Acts as a radical domain for damaged PFL and possibly other radical proteins.</text>
</comment>
<keyword id="KW-0556">Organic radical</keyword>
<evidence type="ECO:0000255" key="1">
    <source>
        <dbReference type="HAMAP-Rule" id="MF_00806"/>
    </source>
</evidence>
<organism>
    <name type="scientific">Yersinia enterocolitica serotype O:8 / biotype 1B (strain NCTC 13174 / 8081)</name>
    <dbReference type="NCBI Taxonomy" id="393305"/>
    <lineage>
        <taxon>Bacteria</taxon>
        <taxon>Pseudomonadati</taxon>
        <taxon>Pseudomonadota</taxon>
        <taxon>Gammaproteobacteria</taxon>
        <taxon>Enterobacterales</taxon>
        <taxon>Yersiniaceae</taxon>
        <taxon>Yersinia</taxon>
    </lineage>
</organism>
<feature type="chain" id="PRO_1000083740" description="Autonomous glycyl radical cofactor">
    <location>
        <begin position="1"/>
        <end position="127"/>
    </location>
</feature>
<feature type="domain" description="Glycine radical" evidence="1">
    <location>
        <begin position="5"/>
        <end position="127"/>
    </location>
</feature>
<feature type="modified residue" description="Glycine radical" evidence="1">
    <location>
        <position position="102"/>
    </location>
</feature>
<accession>A1JKI9</accession>